<reference key="1">
    <citation type="journal article" date="2015" name="Genome Announc.">
        <title>Genome sequence of Aspergillus flavus NRRL 3357, a strain that causes aflatoxin contamination of food and feed.</title>
        <authorList>
            <person name="Nierman W.C."/>
            <person name="Yu J."/>
            <person name="Fedorova-Abrams N.D."/>
            <person name="Losada L."/>
            <person name="Cleveland T.E."/>
            <person name="Bhatnagar D."/>
            <person name="Bennett J.W."/>
            <person name="Dean R."/>
            <person name="Payne G.A."/>
        </authorList>
    </citation>
    <scope>NUCLEOTIDE SEQUENCE [LARGE SCALE GENOMIC DNA]</scope>
    <source>
        <strain>ATCC 200026 / FGSC A1120 / IAM 13836 / NRRL 3357 / JCM 12722 / SRRC 167</strain>
    </source>
</reference>
<reference key="2">
    <citation type="journal article" date="2013" name="Angew. Chem. Int. Ed.">
        <title>Homologous NRPS-like gene clusters mediate redundant small-molecule biosynthesis in Aspergillus flavus.</title>
        <authorList>
            <person name="Forseth R.R."/>
            <person name="Amaike S."/>
            <person name="Schwenk D."/>
            <person name="Affeldt K.J."/>
            <person name="Hoffmeister D."/>
            <person name="Schroeder F.C."/>
            <person name="Keller N.P."/>
        </authorList>
    </citation>
    <scope>IDENTIFICATION</scope>
    <scope>FUNCTION</scope>
    <scope>PATHWAY</scope>
</reference>
<feature type="chain" id="PRO_0000446077" description="NmrA-like family domain-containing oxidoreductase lnbB">
    <location>
        <begin position="1"/>
        <end position="335"/>
    </location>
</feature>
<feature type="binding site" evidence="1">
    <location>
        <begin position="14"/>
        <end position="18"/>
    </location>
    <ligand>
        <name>NADP(+)</name>
        <dbReference type="ChEBI" id="CHEBI:58349"/>
    </ligand>
</feature>
<feature type="binding site" evidence="1">
    <location>
        <begin position="41"/>
        <end position="45"/>
    </location>
    <ligand>
        <name>NADP(+)</name>
        <dbReference type="ChEBI" id="CHEBI:58349"/>
    </ligand>
</feature>
<feature type="binding site" evidence="1">
    <location>
        <begin position="62"/>
        <end position="63"/>
    </location>
    <ligand>
        <name>NADP(+)</name>
        <dbReference type="ChEBI" id="CHEBI:58349"/>
    </ligand>
</feature>
<feature type="binding site" evidence="1">
    <location>
        <begin position="83"/>
        <end position="85"/>
    </location>
    <ligand>
        <name>NADP(+)</name>
        <dbReference type="ChEBI" id="CHEBI:58349"/>
    </ligand>
</feature>
<feature type="binding site" evidence="1">
    <location>
        <position position="142"/>
    </location>
    <ligand>
        <name>NADP(+)</name>
        <dbReference type="ChEBI" id="CHEBI:58349"/>
    </ligand>
</feature>
<feature type="binding site" evidence="1">
    <location>
        <begin position="166"/>
        <end position="169"/>
    </location>
    <ligand>
        <name>NADP(+)</name>
        <dbReference type="ChEBI" id="CHEBI:58349"/>
    </ligand>
</feature>
<sequence>MTVTATERIVTVFGTGNQAGAVARALLADKTSQFKVRAISRHPDSASSRTLSALGVQVVKADGWNLEELTRAFADTWAAFVNTNSDDPLFLQKGDGPTEFDLGKNIIDSLVAAKVQHLVYSCFASSVEQTKGKLFIKPMEMKYQALKYARETGHFATTCGIYAAWYYEQFLDKATADVFGGFPTTPDEEGYITFRAPLWGDDEHPSFVSITHDFGDMVHGILLEPEQWDGKSVPAASDVMTFEQLAQTLQNATGRKSRYIPLPSWEDFGRGIPELDDHKLLFAFTQATGGRYFGDVPTETKTALRLKRRAAEAQGKSGNEANLLSMEEWFKTNFA</sequence>
<gene>
    <name evidence="3" type="primary">lnaB</name>
    <name type="ORF">AFLA_121490</name>
</gene>
<name>LNBB_ASPFN</name>
<accession>B8NWW2</accession>
<dbReference type="EC" id="1.-.-.-" evidence="5"/>
<dbReference type="EMBL" id="EQ963485">
    <property type="protein sequence ID" value="EED45920.1"/>
    <property type="molecule type" value="Genomic_DNA"/>
</dbReference>
<dbReference type="RefSeq" id="XP_002384856.1">
    <property type="nucleotide sequence ID" value="XM_002384815.1"/>
</dbReference>
<dbReference type="SMR" id="B8NWW2"/>
<dbReference type="STRING" id="332952.B8NWW2"/>
<dbReference type="EnsemblFungi" id="EED45920">
    <property type="protein sequence ID" value="EED45920"/>
    <property type="gene ID" value="AFLA_121490"/>
</dbReference>
<dbReference type="VEuPathDB" id="FungiDB:AFLA_014152"/>
<dbReference type="eggNOG" id="ENOG502SKP9">
    <property type="taxonomic scope" value="Eukaryota"/>
</dbReference>
<dbReference type="HOGENOM" id="CLU_007383_8_5_1"/>
<dbReference type="OMA" id="FQEPEKY"/>
<dbReference type="GO" id="GO:0005634">
    <property type="term" value="C:nucleus"/>
    <property type="evidence" value="ECO:0007669"/>
    <property type="project" value="TreeGrafter"/>
</dbReference>
<dbReference type="GO" id="GO:0016491">
    <property type="term" value="F:oxidoreductase activity"/>
    <property type="evidence" value="ECO:0007669"/>
    <property type="project" value="UniProtKB-KW"/>
</dbReference>
<dbReference type="CDD" id="cd05251">
    <property type="entry name" value="NmrA_like_SDR_a"/>
    <property type="match status" value="1"/>
</dbReference>
<dbReference type="Gene3D" id="3.40.50.720">
    <property type="entry name" value="NAD(P)-binding Rossmann-like Domain"/>
    <property type="match status" value="1"/>
</dbReference>
<dbReference type="Gene3D" id="3.90.25.10">
    <property type="entry name" value="UDP-galactose 4-epimerase, domain 1"/>
    <property type="match status" value="1"/>
</dbReference>
<dbReference type="InterPro" id="IPR036291">
    <property type="entry name" value="NAD(P)-bd_dom_sf"/>
</dbReference>
<dbReference type="InterPro" id="IPR008030">
    <property type="entry name" value="NmrA-like"/>
</dbReference>
<dbReference type="InterPro" id="IPR051164">
    <property type="entry name" value="NmrA-like_oxidored"/>
</dbReference>
<dbReference type="PANTHER" id="PTHR42748">
    <property type="entry name" value="NITROGEN METABOLITE REPRESSION PROTEIN NMRA FAMILY MEMBER"/>
    <property type="match status" value="1"/>
</dbReference>
<dbReference type="PANTHER" id="PTHR42748:SF7">
    <property type="entry name" value="NMRA LIKE REDOX SENSOR 1-RELATED"/>
    <property type="match status" value="1"/>
</dbReference>
<dbReference type="Pfam" id="PF05368">
    <property type="entry name" value="NmrA"/>
    <property type="match status" value="1"/>
</dbReference>
<dbReference type="SUPFAM" id="SSF51735">
    <property type="entry name" value="NAD(P)-binding Rossmann-fold domains"/>
    <property type="match status" value="1"/>
</dbReference>
<protein>
    <recommendedName>
        <fullName evidence="3">NmrA-like family domain-containing oxidoreductase lnbB</fullName>
        <ecNumber evidence="5">1.-.-.-</ecNumber>
    </recommendedName>
    <alternativeName>
        <fullName evidence="3">Lnb diastereomeric piperazines biosynthesis cluster protein B</fullName>
    </alternativeName>
</protein>
<keyword id="KW-0521">NADP</keyword>
<keyword id="KW-0560">Oxidoreductase</keyword>
<organism>
    <name type="scientific">Aspergillus flavus (strain ATCC 200026 / FGSC A1120 / IAM 13836 / NRRL 3357 / JCM 12722 / SRRC 167)</name>
    <dbReference type="NCBI Taxonomy" id="332952"/>
    <lineage>
        <taxon>Eukaryota</taxon>
        <taxon>Fungi</taxon>
        <taxon>Dikarya</taxon>
        <taxon>Ascomycota</taxon>
        <taxon>Pezizomycotina</taxon>
        <taxon>Eurotiomycetes</taxon>
        <taxon>Eurotiomycetidae</taxon>
        <taxon>Eurotiales</taxon>
        <taxon>Aspergillaceae</taxon>
        <taxon>Aspergillus</taxon>
        <taxon>Aspergillus subgen. Circumdati</taxon>
    </lineage>
</organism>
<evidence type="ECO:0000250" key="1">
    <source>
        <dbReference type="UniProtKB" id="Q9HBL8"/>
    </source>
</evidence>
<evidence type="ECO:0000269" key="2">
    <source>
    </source>
</evidence>
<evidence type="ECO:0000303" key="3">
    <source>
    </source>
</evidence>
<evidence type="ECO:0000305" key="4"/>
<evidence type="ECO:0000305" key="5">
    <source>
    </source>
</evidence>
<comment type="function">
    <text evidence="2">NmrA-like family domain-containing oxidoreductase; part of the lnb gene cluster that mediates the biosynthesis of diastereomeric piperazines. Lna and lnb clusters encode sets of enzymes that produce overlapping sets of previously undescribed metabolites such as piperazinomycin-like metabolites or morpholine (PubMed:23281040). The lna and lnb biosynthetic pathways appear to be part of a signaling network that controls the formation of sclerotia, a resilient overwintering structure (PubMed:23281040). One primary function of the non-canonical nonribosomal peptide synthetases lnaA and lnbA consists in the reduction of L-tyrosine (PubMed:23281040). The presence in the clusters of tailoring enzymes such as the oxidoreductases lnaB, lnbB, lnaE or lnbE, as well as of the cytochrome P450 monooxygenases lnaC, lnaD, or lnbC, might explain formation of various diastereomeric piperazines (PubMed:23281040).</text>
</comment>
<comment type="pathway">
    <text evidence="5">Secondary metabolite biosynthesis.</text>
</comment>
<comment type="similarity">
    <text evidence="4">Belongs to the NmrA-type oxidoreductase family.</text>
</comment>
<proteinExistence type="inferred from homology"/>